<name>LEPA_RHOJR</name>
<feature type="chain" id="PRO_0000265691" description="Elongation factor 4">
    <location>
        <begin position="1"/>
        <end position="630"/>
    </location>
</feature>
<feature type="domain" description="tr-type G">
    <location>
        <begin position="30"/>
        <end position="211"/>
    </location>
</feature>
<feature type="region of interest" description="Disordered" evidence="2">
    <location>
        <begin position="1"/>
        <end position="22"/>
    </location>
</feature>
<feature type="binding site" evidence="1">
    <location>
        <begin position="42"/>
        <end position="47"/>
    </location>
    <ligand>
        <name>GTP</name>
        <dbReference type="ChEBI" id="CHEBI:37565"/>
    </ligand>
</feature>
<feature type="binding site" evidence="1">
    <location>
        <begin position="158"/>
        <end position="161"/>
    </location>
    <ligand>
        <name>GTP</name>
        <dbReference type="ChEBI" id="CHEBI:37565"/>
    </ligand>
</feature>
<accession>Q0SH84</accession>
<keyword id="KW-1003">Cell membrane</keyword>
<keyword id="KW-0342">GTP-binding</keyword>
<keyword id="KW-0378">Hydrolase</keyword>
<keyword id="KW-0472">Membrane</keyword>
<keyword id="KW-0547">Nucleotide-binding</keyword>
<keyword id="KW-0648">Protein biosynthesis</keyword>
<dbReference type="EC" id="3.6.5.n1" evidence="1"/>
<dbReference type="EMBL" id="CP000431">
    <property type="protein sequence ID" value="ABG93102.1"/>
    <property type="molecule type" value="Genomic_DNA"/>
</dbReference>
<dbReference type="RefSeq" id="WP_011594349.1">
    <property type="nucleotide sequence ID" value="NC_008268.1"/>
</dbReference>
<dbReference type="SMR" id="Q0SH84"/>
<dbReference type="KEGG" id="rha:RHA1_ro01278"/>
<dbReference type="PATRIC" id="fig|101510.16.peg.1302"/>
<dbReference type="eggNOG" id="COG0481">
    <property type="taxonomic scope" value="Bacteria"/>
</dbReference>
<dbReference type="HOGENOM" id="CLU_009995_3_3_11"/>
<dbReference type="OrthoDB" id="9801472at2"/>
<dbReference type="Proteomes" id="UP000008710">
    <property type="component" value="Chromosome"/>
</dbReference>
<dbReference type="GO" id="GO:0005886">
    <property type="term" value="C:plasma membrane"/>
    <property type="evidence" value="ECO:0007669"/>
    <property type="project" value="UniProtKB-SubCell"/>
</dbReference>
<dbReference type="GO" id="GO:0005525">
    <property type="term" value="F:GTP binding"/>
    <property type="evidence" value="ECO:0007669"/>
    <property type="project" value="UniProtKB-UniRule"/>
</dbReference>
<dbReference type="GO" id="GO:0003924">
    <property type="term" value="F:GTPase activity"/>
    <property type="evidence" value="ECO:0007669"/>
    <property type="project" value="UniProtKB-UniRule"/>
</dbReference>
<dbReference type="GO" id="GO:0043022">
    <property type="term" value="F:ribosome binding"/>
    <property type="evidence" value="ECO:0007669"/>
    <property type="project" value="UniProtKB-UniRule"/>
</dbReference>
<dbReference type="GO" id="GO:0003746">
    <property type="term" value="F:translation elongation factor activity"/>
    <property type="evidence" value="ECO:0007669"/>
    <property type="project" value="UniProtKB-UniRule"/>
</dbReference>
<dbReference type="GO" id="GO:0045727">
    <property type="term" value="P:positive regulation of translation"/>
    <property type="evidence" value="ECO:0007669"/>
    <property type="project" value="UniProtKB-UniRule"/>
</dbReference>
<dbReference type="CDD" id="cd03699">
    <property type="entry name" value="EF4_II"/>
    <property type="match status" value="1"/>
</dbReference>
<dbReference type="CDD" id="cd16260">
    <property type="entry name" value="EF4_III"/>
    <property type="match status" value="1"/>
</dbReference>
<dbReference type="CDD" id="cd01890">
    <property type="entry name" value="LepA"/>
    <property type="match status" value="1"/>
</dbReference>
<dbReference type="CDD" id="cd03709">
    <property type="entry name" value="lepA_C"/>
    <property type="match status" value="1"/>
</dbReference>
<dbReference type="FunFam" id="3.30.70.240:FF:000011">
    <property type="entry name" value="Elongation factor 4"/>
    <property type="match status" value="1"/>
</dbReference>
<dbReference type="FunFam" id="3.40.50.300:FF:000078">
    <property type="entry name" value="Elongation factor 4"/>
    <property type="match status" value="1"/>
</dbReference>
<dbReference type="FunFam" id="2.40.30.10:FF:000015">
    <property type="entry name" value="Translation factor GUF1, mitochondrial"/>
    <property type="match status" value="1"/>
</dbReference>
<dbReference type="FunFam" id="3.30.70.2570:FF:000001">
    <property type="entry name" value="Translation factor GUF1, mitochondrial"/>
    <property type="match status" value="1"/>
</dbReference>
<dbReference type="FunFam" id="3.30.70.870:FF:000004">
    <property type="entry name" value="Translation factor GUF1, mitochondrial"/>
    <property type="match status" value="1"/>
</dbReference>
<dbReference type="Gene3D" id="3.30.70.240">
    <property type="match status" value="1"/>
</dbReference>
<dbReference type="Gene3D" id="3.30.70.2570">
    <property type="entry name" value="Elongation factor 4, C-terminal domain"/>
    <property type="match status" value="1"/>
</dbReference>
<dbReference type="Gene3D" id="3.30.70.870">
    <property type="entry name" value="Elongation Factor G (Translational Gtpase), domain 3"/>
    <property type="match status" value="1"/>
</dbReference>
<dbReference type="Gene3D" id="3.40.50.300">
    <property type="entry name" value="P-loop containing nucleotide triphosphate hydrolases"/>
    <property type="match status" value="1"/>
</dbReference>
<dbReference type="Gene3D" id="2.40.30.10">
    <property type="entry name" value="Translation factors"/>
    <property type="match status" value="1"/>
</dbReference>
<dbReference type="HAMAP" id="MF_00071">
    <property type="entry name" value="LepA"/>
    <property type="match status" value="1"/>
</dbReference>
<dbReference type="InterPro" id="IPR006297">
    <property type="entry name" value="EF-4"/>
</dbReference>
<dbReference type="InterPro" id="IPR035647">
    <property type="entry name" value="EFG_III/V"/>
</dbReference>
<dbReference type="InterPro" id="IPR000640">
    <property type="entry name" value="EFG_V-like"/>
</dbReference>
<dbReference type="InterPro" id="IPR004161">
    <property type="entry name" value="EFTu-like_2"/>
</dbReference>
<dbReference type="InterPro" id="IPR031157">
    <property type="entry name" value="G_TR_CS"/>
</dbReference>
<dbReference type="InterPro" id="IPR038363">
    <property type="entry name" value="LepA_C_sf"/>
</dbReference>
<dbReference type="InterPro" id="IPR013842">
    <property type="entry name" value="LepA_CTD"/>
</dbReference>
<dbReference type="InterPro" id="IPR035654">
    <property type="entry name" value="LepA_IV"/>
</dbReference>
<dbReference type="InterPro" id="IPR027417">
    <property type="entry name" value="P-loop_NTPase"/>
</dbReference>
<dbReference type="InterPro" id="IPR005225">
    <property type="entry name" value="Small_GTP-bd"/>
</dbReference>
<dbReference type="InterPro" id="IPR000795">
    <property type="entry name" value="T_Tr_GTP-bd_dom"/>
</dbReference>
<dbReference type="InterPro" id="IPR009000">
    <property type="entry name" value="Transl_B-barrel_sf"/>
</dbReference>
<dbReference type="NCBIfam" id="TIGR01393">
    <property type="entry name" value="lepA"/>
    <property type="match status" value="1"/>
</dbReference>
<dbReference type="NCBIfam" id="TIGR00231">
    <property type="entry name" value="small_GTP"/>
    <property type="match status" value="1"/>
</dbReference>
<dbReference type="PANTHER" id="PTHR43512:SF4">
    <property type="entry name" value="TRANSLATION FACTOR GUF1 HOMOLOG, CHLOROPLASTIC"/>
    <property type="match status" value="1"/>
</dbReference>
<dbReference type="PANTHER" id="PTHR43512">
    <property type="entry name" value="TRANSLATION FACTOR GUF1-RELATED"/>
    <property type="match status" value="1"/>
</dbReference>
<dbReference type="Pfam" id="PF00679">
    <property type="entry name" value="EFG_C"/>
    <property type="match status" value="1"/>
</dbReference>
<dbReference type="Pfam" id="PF00009">
    <property type="entry name" value="GTP_EFTU"/>
    <property type="match status" value="1"/>
</dbReference>
<dbReference type="Pfam" id="PF03144">
    <property type="entry name" value="GTP_EFTU_D2"/>
    <property type="match status" value="1"/>
</dbReference>
<dbReference type="Pfam" id="PF06421">
    <property type="entry name" value="LepA_C"/>
    <property type="match status" value="1"/>
</dbReference>
<dbReference type="PRINTS" id="PR00315">
    <property type="entry name" value="ELONGATNFCT"/>
</dbReference>
<dbReference type="SMART" id="SM00838">
    <property type="entry name" value="EFG_C"/>
    <property type="match status" value="1"/>
</dbReference>
<dbReference type="SUPFAM" id="SSF54980">
    <property type="entry name" value="EF-G C-terminal domain-like"/>
    <property type="match status" value="2"/>
</dbReference>
<dbReference type="SUPFAM" id="SSF52540">
    <property type="entry name" value="P-loop containing nucleoside triphosphate hydrolases"/>
    <property type="match status" value="1"/>
</dbReference>
<dbReference type="SUPFAM" id="SSF50447">
    <property type="entry name" value="Translation proteins"/>
    <property type="match status" value="1"/>
</dbReference>
<dbReference type="PROSITE" id="PS00301">
    <property type="entry name" value="G_TR_1"/>
    <property type="match status" value="1"/>
</dbReference>
<dbReference type="PROSITE" id="PS51722">
    <property type="entry name" value="G_TR_2"/>
    <property type="match status" value="1"/>
</dbReference>
<protein>
    <recommendedName>
        <fullName evidence="1">Elongation factor 4</fullName>
        <shortName evidence="1">EF-4</shortName>
        <ecNumber evidence="1">3.6.5.n1</ecNumber>
    </recommendedName>
    <alternativeName>
        <fullName evidence="1">Ribosomal back-translocase LepA</fullName>
    </alternativeName>
</protein>
<organism>
    <name type="scientific">Rhodococcus jostii (strain RHA1)</name>
    <dbReference type="NCBI Taxonomy" id="101510"/>
    <lineage>
        <taxon>Bacteria</taxon>
        <taxon>Bacillati</taxon>
        <taxon>Actinomycetota</taxon>
        <taxon>Actinomycetes</taxon>
        <taxon>Mycobacteriales</taxon>
        <taxon>Nocardiaceae</taxon>
        <taxon>Rhodococcus</taxon>
    </lineage>
</organism>
<reference key="1">
    <citation type="journal article" date="2006" name="Proc. Natl. Acad. Sci. U.S.A.">
        <title>The complete genome of Rhodococcus sp. RHA1 provides insights into a catabolic powerhouse.</title>
        <authorList>
            <person name="McLeod M.P."/>
            <person name="Warren R.L."/>
            <person name="Hsiao W.W.L."/>
            <person name="Araki N."/>
            <person name="Myhre M."/>
            <person name="Fernandes C."/>
            <person name="Miyazawa D."/>
            <person name="Wong W."/>
            <person name="Lillquist A.L."/>
            <person name="Wang D."/>
            <person name="Dosanjh M."/>
            <person name="Hara H."/>
            <person name="Petrescu A."/>
            <person name="Morin R.D."/>
            <person name="Yang G."/>
            <person name="Stott J.M."/>
            <person name="Schein J.E."/>
            <person name="Shin H."/>
            <person name="Smailus D."/>
            <person name="Siddiqui A.S."/>
            <person name="Marra M.A."/>
            <person name="Jones S.J.M."/>
            <person name="Holt R."/>
            <person name="Brinkman F.S.L."/>
            <person name="Miyauchi K."/>
            <person name="Fukuda M."/>
            <person name="Davies J.E."/>
            <person name="Mohn W.W."/>
            <person name="Eltis L.D."/>
        </authorList>
    </citation>
    <scope>NUCLEOTIDE SEQUENCE [LARGE SCALE GENOMIC DNA]</scope>
    <source>
        <strain>RHA1</strain>
    </source>
</reference>
<proteinExistence type="inferred from homology"/>
<comment type="function">
    <text evidence="1">Required for accurate and efficient protein synthesis under certain stress conditions. May act as a fidelity factor of the translation reaction, by catalyzing a one-codon backward translocation of tRNAs on improperly translocated ribosomes. Back-translocation proceeds from a post-translocation (POST) complex to a pre-translocation (PRE) complex, thus giving elongation factor G a second chance to translocate the tRNAs correctly. Binds to ribosomes in a GTP-dependent manner.</text>
</comment>
<comment type="catalytic activity">
    <reaction evidence="1">
        <text>GTP + H2O = GDP + phosphate + H(+)</text>
        <dbReference type="Rhea" id="RHEA:19669"/>
        <dbReference type="ChEBI" id="CHEBI:15377"/>
        <dbReference type="ChEBI" id="CHEBI:15378"/>
        <dbReference type="ChEBI" id="CHEBI:37565"/>
        <dbReference type="ChEBI" id="CHEBI:43474"/>
        <dbReference type="ChEBI" id="CHEBI:58189"/>
        <dbReference type="EC" id="3.6.5.n1"/>
    </reaction>
</comment>
<comment type="subcellular location">
    <subcellularLocation>
        <location evidence="1">Cell membrane</location>
        <topology evidence="1">Peripheral membrane protein</topology>
        <orientation evidence="1">Cytoplasmic side</orientation>
    </subcellularLocation>
</comment>
<comment type="similarity">
    <text evidence="1">Belongs to the TRAFAC class translation factor GTPase superfamily. Classic translation factor GTPase family. LepA subfamily.</text>
</comment>
<evidence type="ECO:0000255" key="1">
    <source>
        <dbReference type="HAMAP-Rule" id="MF_00071"/>
    </source>
</evidence>
<evidence type="ECO:0000256" key="2">
    <source>
        <dbReference type="SAM" id="MobiDB-lite"/>
    </source>
</evidence>
<sequence length="630" mass="69478">MTVARNRAGAGPGKGSPISSFADKTFTDPARIRNFCIIAHIDHGKSTLADRMLQLTGVVEERQMRAQYLDRMDIERERGITIKAQNVRLPWKVGDEEFVIHLIDTPGHVDFTYEVSRALEACEGAVLLVDAAQGIEAQTLANLYLAMEKDLTIIPVLNKIDLPAADPDRYAEEIAHITGCEPGDVLRVSGKTGIGVKELLDEVVRQVPAPVGDPDGPARAMIFDSVYDAYRGVVTYVRVVDGRISPREKITMMSTGTTHDLIEVGIISPEPKASIGLGVGEVGYLITGVKDVRQSRVGDTVTAARGGATEPLVGYRDPKPMVYSGLYPLDGSDYPVLRDALDKLRLNDAALAYEPETSVALGFGFRCGFLGLLHMEITRDRLEREFGLELISTSPNVVYRVVMEDGSEHVVTNPSYWPEGKIREVYEPMVKCTIIAPSEFIGAIMELCQNRRGELGGMDYLSETRVELRYEMPMGEIMFDFFDALKSRTKGYASLDYEESGEQQADLVKVDILLQGEAVDAFSSIVHRSAAGAYGGRMTSKLRELIPRQQFEVPIQAAIGSKIISRENIRAIRKDVLAKCYGGDISRKRKLLEKQKEGKKRMKTIGRVEVPQEAFVAALSSESVGDKPKK</sequence>
<gene>
    <name evidence="1" type="primary">lepA</name>
    <name type="ordered locus">RHA1_ro01278</name>
</gene>